<gene>
    <name evidence="1" type="primary">ispD</name>
    <name type="ordered locus">COSY_0697</name>
</gene>
<keyword id="KW-0414">Isoprene biosynthesis</keyword>
<keyword id="KW-0548">Nucleotidyltransferase</keyword>
<keyword id="KW-1185">Reference proteome</keyword>
<keyword id="KW-0808">Transferase</keyword>
<dbReference type="EC" id="2.7.7.60" evidence="1"/>
<dbReference type="EMBL" id="AP009247">
    <property type="protein sequence ID" value="BAF61809.1"/>
    <property type="molecule type" value="Genomic_DNA"/>
</dbReference>
<dbReference type="RefSeq" id="WP_011930079.1">
    <property type="nucleotide sequence ID" value="NC_009465.1"/>
</dbReference>
<dbReference type="SMR" id="A5CW51"/>
<dbReference type="STRING" id="412965.COSY_0697"/>
<dbReference type="KEGG" id="vok:COSY_0697"/>
<dbReference type="eggNOG" id="COG1211">
    <property type="taxonomic scope" value="Bacteria"/>
</dbReference>
<dbReference type="HOGENOM" id="CLU_061281_3_1_6"/>
<dbReference type="OrthoDB" id="9806837at2"/>
<dbReference type="UniPathway" id="UPA00056">
    <property type="reaction ID" value="UER00093"/>
</dbReference>
<dbReference type="Proteomes" id="UP000000247">
    <property type="component" value="Chromosome"/>
</dbReference>
<dbReference type="GO" id="GO:0050518">
    <property type="term" value="F:2-C-methyl-D-erythritol 4-phosphate cytidylyltransferase activity"/>
    <property type="evidence" value="ECO:0007669"/>
    <property type="project" value="UniProtKB-UniRule"/>
</dbReference>
<dbReference type="GO" id="GO:0019288">
    <property type="term" value="P:isopentenyl diphosphate biosynthetic process, methylerythritol 4-phosphate pathway"/>
    <property type="evidence" value="ECO:0007669"/>
    <property type="project" value="UniProtKB-UniRule"/>
</dbReference>
<dbReference type="CDD" id="cd02516">
    <property type="entry name" value="CDP-ME_synthetase"/>
    <property type="match status" value="1"/>
</dbReference>
<dbReference type="FunFam" id="3.90.550.10:FF:000003">
    <property type="entry name" value="2-C-methyl-D-erythritol 4-phosphate cytidylyltransferase"/>
    <property type="match status" value="1"/>
</dbReference>
<dbReference type="Gene3D" id="3.90.550.10">
    <property type="entry name" value="Spore Coat Polysaccharide Biosynthesis Protein SpsA, Chain A"/>
    <property type="match status" value="1"/>
</dbReference>
<dbReference type="HAMAP" id="MF_00108">
    <property type="entry name" value="IspD"/>
    <property type="match status" value="1"/>
</dbReference>
<dbReference type="InterPro" id="IPR001228">
    <property type="entry name" value="IspD"/>
</dbReference>
<dbReference type="InterPro" id="IPR034683">
    <property type="entry name" value="IspD/TarI"/>
</dbReference>
<dbReference type="InterPro" id="IPR050088">
    <property type="entry name" value="IspD/TarI_cytidylyltransf_bact"/>
</dbReference>
<dbReference type="InterPro" id="IPR018294">
    <property type="entry name" value="ISPD_synthase_CS"/>
</dbReference>
<dbReference type="InterPro" id="IPR029044">
    <property type="entry name" value="Nucleotide-diphossugar_trans"/>
</dbReference>
<dbReference type="NCBIfam" id="TIGR00453">
    <property type="entry name" value="ispD"/>
    <property type="match status" value="1"/>
</dbReference>
<dbReference type="PANTHER" id="PTHR32125">
    <property type="entry name" value="2-C-METHYL-D-ERYTHRITOL 4-PHOSPHATE CYTIDYLYLTRANSFERASE, CHLOROPLASTIC"/>
    <property type="match status" value="1"/>
</dbReference>
<dbReference type="PANTHER" id="PTHR32125:SF4">
    <property type="entry name" value="2-C-METHYL-D-ERYTHRITOL 4-PHOSPHATE CYTIDYLYLTRANSFERASE, CHLOROPLASTIC"/>
    <property type="match status" value="1"/>
</dbReference>
<dbReference type="Pfam" id="PF01128">
    <property type="entry name" value="IspD"/>
    <property type="match status" value="1"/>
</dbReference>
<dbReference type="SUPFAM" id="SSF53448">
    <property type="entry name" value="Nucleotide-diphospho-sugar transferases"/>
    <property type="match status" value="1"/>
</dbReference>
<dbReference type="PROSITE" id="PS01295">
    <property type="entry name" value="ISPD"/>
    <property type="match status" value="1"/>
</dbReference>
<accession>A5CW51</accession>
<sequence length="242" mass="27242">MSNDYYLIIPAGGIGTRMHSEKDNINRKIKIAKQYLKLDNGLTILDQTLKILLNIDQIKGCIIALANKDYLFTKSKFNNHSKLITTVIGGKKRMNSVFNGLKALTNLAKDDDWILVHDSVRPCVKASEIINLMNQLKHHETGGLLATKVVDTIKQASNNIVNTTIDRSNLWQAQTPQMYRFGVLLKALNTVINDGMNITDEASAIEYLRLKSVLVKSSKSNIKITNSEDLELANFYLTQYKE</sequence>
<feature type="chain" id="PRO_1000191076" description="2-C-methyl-D-erythritol 4-phosphate cytidylyltransferase">
    <location>
        <begin position="1"/>
        <end position="242"/>
    </location>
</feature>
<feature type="site" description="Transition state stabilizer" evidence="1">
    <location>
        <position position="17"/>
    </location>
</feature>
<feature type="site" description="Transition state stabilizer" evidence="1">
    <location>
        <position position="33"/>
    </location>
</feature>
<feature type="site" description="Positions MEP for the nucleophilic attack" evidence="1">
    <location>
        <position position="167"/>
    </location>
</feature>
<feature type="site" description="Positions MEP for the nucleophilic attack" evidence="1">
    <location>
        <position position="223"/>
    </location>
</feature>
<name>ISPD_VESOH</name>
<protein>
    <recommendedName>
        <fullName evidence="1">2-C-methyl-D-erythritol 4-phosphate cytidylyltransferase</fullName>
        <ecNumber evidence="1">2.7.7.60</ecNumber>
    </recommendedName>
    <alternativeName>
        <fullName evidence="1">4-diphosphocytidyl-2C-methyl-D-erythritol synthase</fullName>
    </alternativeName>
    <alternativeName>
        <fullName evidence="1">MEP cytidylyltransferase</fullName>
        <shortName evidence="1">MCT</shortName>
    </alternativeName>
</protein>
<evidence type="ECO:0000255" key="1">
    <source>
        <dbReference type="HAMAP-Rule" id="MF_00108"/>
    </source>
</evidence>
<organism>
    <name type="scientific">Vesicomyosocius okutanii subsp. Calyptogena okutanii (strain HA)</name>
    <dbReference type="NCBI Taxonomy" id="412965"/>
    <lineage>
        <taxon>Bacteria</taxon>
        <taxon>Pseudomonadati</taxon>
        <taxon>Pseudomonadota</taxon>
        <taxon>Gammaproteobacteria</taxon>
        <taxon>Candidatus Pseudothioglobaceae</taxon>
        <taxon>Candidatus Vesicomyosocius</taxon>
    </lineage>
</organism>
<proteinExistence type="inferred from homology"/>
<reference key="1">
    <citation type="journal article" date="2007" name="Curr. Biol.">
        <title>Reduced genome of the thioautotrophic intracellular symbiont in a deep-sea clam, Calyptogena okutanii.</title>
        <authorList>
            <person name="Kuwahara H."/>
            <person name="Yoshida T."/>
            <person name="Takaki Y."/>
            <person name="Shimamura S."/>
            <person name="Nishi S."/>
            <person name="Harada M."/>
            <person name="Matsuyama K."/>
            <person name="Takishita K."/>
            <person name="Kawato M."/>
            <person name="Uematsu K."/>
            <person name="Fujiwara Y."/>
            <person name="Sato T."/>
            <person name="Kato C."/>
            <person name="Kitagawa M."/>
            <person name="Kato I."/>
            <person name="Maruyama T."/>
        </authorList>
    </citation>
    <scope>NUCLEOTIDE SEQUENCE [LARGE SCALE GENOMIC DNA]</scope>
    <source>
        <strain>HA</strain>
    </source>
</reference>
<comment type="function">
    <text evidence="1">Catalyzes the formation of 4-diphosphocytidyl-2-C-methyl-D-erythritol from CTP and 2-C-methyl-D-erythritol 4-phosphate (MEP).</text>
</comment>
<comment type="catalytic activity">
    <reaction evidence="1">
        <text>2-C-methyl-D-erythritol 4-phosphate + CTP + H(+) = 4-CDP-2-C-methyl-D-erythritol + diphosphate</text>
        <dbReference type="Rhea" id="RHEA:13429"/>
        <dbReference type="ChEBI" id="CHEBI:15378"/>
        <dbReference type="ChEBI" id="CHEBI:33019"/>
        <dbReference type="ChEBI" id="CHEBI:37563"/>
        <dbReference type="ChEBI" id="CHEBI:57823"/>
        <dbReference type="ChEBI" id="CHEBI:58262"/>
        <dbReference type="EC" id="2.7.7.60"/>
    </reaction>
</comment>
<comment type="pathway">
    <text evidence="1">Isoprenoid biosynthesis; isopentenyl diphosphate biosynthesis via DXP pathway; isopentenyl diphosphate from 1-deoxy-D-xylulose 5-phosphate: step 2/6.</text>
</comment>
<comment type="similarity">
    <text evidence="1">Belongs to the IspD/TarI cytidylyltransferase family. IspD subfamily.</text>
</comment>